<dbReference type="EC" id="2.5.1.44"/>
<dbReference type="EMBL" id="L77975">
    <property type="protein sequence ID" value="AAB63957.1"/>
    <property type="molecule type" value="mRNA"/>
</dbReference>
<dbReference type="PDB" id="4PLP">
    <property type="method" value="X-ray"/>
    <property type="resolution" value="1.49 A"/>
    <property type="chains" value="A/B=1-477"/>
</dbReference>
<dbReference type="PDB" id="4TVB">
    <property type="method" value="X-ray"/>
    <property type="resolution" value="1.69 A"/>
    <property type="chains" value="A/B=1-477"/>
</dbReference>
<dbReference type="PDB" id="4XQ9">
    <property type="method" value="X-ray"/>
    <property type="resolution" value="1.60 A"/>
    <property type="chains" value="A/B=3-476"/>
</dbReference>
<dbReference type="PDB" id="4XQC">
    <property type="method" value="X-ray"/>
    <property type="resolution" value="1.27 A"/>
    <property type="chains" value="A/B=3-477"/>
</dbReference>
<dbReference type="PDB" id="4XQE">
    <property type="method" value="X-ray"/>
    <property type="resolution" value="1.30 A"/>
    <property type="chains" value="A/B=3-476"/>
</dbReference>
<dbReference type="PDB" id="4XQG">
    <property type="method" value="X-ray"/>
    <property type="resolution" value="1.42 A"/>
    <property type="chains" value="A/B=3-477"/>
</dbReference>
<dbReference type="PDB" id="4XR4">
    <property type="method" value="X-ray"/>
    <property type="resolution" value="1.63 A"/>
    <property type="chains" value="A/B=3-476"/>
</dbReference>
<dbReference type="PDB" id="4XRG">
    <property type="method" value="X-ray"/>
    <property type="resolution" value="1.30 A"/>
    <property type="chains" value="A/B=3-476"/>
</dbReference>
<dbReference type="PDB" id="6S3X">
    <property type="method" value="X-ray"/>
    <property type="resolution" value="1.72 A"/>
    <property type="chains" value="A/B=2-477"/>
</dbReference>
<dbReference type="PDB" id="6S49">
    <property type="method" value="X-ray"/>
    <property type="resolution" value="1.69 A"/>
    <property type="chains" value="A/B=2-477"/>
</dbReference>
<dbReference type="PDB" id="6S4D">
    <property type="method" value="X-ray"/>
    <property type="resolution" value="1.80 A"/>
    <property type="chains" value="A/B=2-477"/>
</dbReference>
<dbReference type="PDB" id="6S65">
    <property type="method" value="X-ray"/>
    <property type="resolution" value="1.75 A"/>
    <property type="chains" value="A/B=2-477"/>
</dbReference>
<dbReference type="PDB" id="6S6G">
    <property type="method" value="X-ray"/>
    <property type="resolution" value="1.60 A"/>
    <property type="chains" value="A/B=2-477"/>
</dbReference>
<dbReference type="PDB" id="6S72">
    <property type="method" value="X-ray"/>
    <property type="resolution" value="1.87 A"/>
    <property type="chains" value="A/B=2-477"/>
</dbReference>
<dbReference type="PDB" id="6SEP">
    <property type="method" value="X-ray"/>
    <property type="resolution" value="2.20 A"/>
    <property type="chains" value="A/B=2-477"/>
</dbReference>
<dbReference type="PDBsum" id="4PLP"/>
<dbReference type="PDBsum" id="4TVB"/>
<dbReference type="PDBsum" id="4XQ9"/>
<dbReference type="PDBsum" id="4XQC"/>
<dbReference type="PDBsum" id="4XQE"/>
<dbReference type="PDBsum" id="4XQG"/>
<dbReference type="PDBsum" id="4XR4"/>
<dbReference type="PDBsum" id="4XRG"/>
<dbReference type="PDBsum" id="6S3X"/>
<dbReference type="PDBsum" id="6S49"/>
<dbReference type="PDBsum" id="6S4D"/>
<dbReference type="PDBsum" id="6S65"/>
<dbReference type="PDBsum" id="6S6G"/>
<dbReference type="PDBsum" id="6S72"/>
<dbReference type="PDBsum" id="6SEP"/>
<dbReference type="SMR" id="O32323"/>
<dbReference type="STRING" id="1079.BVIR_716"/>
<dbReference type="BioCyc" id="MetaCyc:MONOMER-21190"/>
<dbReference type="BRENDA" id="2.5.1.44">
    <property type="organism ID" value="872"/>
</dbReference>
<dbReference type="EvolutionaryTrace" id="O32323"/>
<dbReference type="GO" id="GO:0050514">
    <property type="term" value="F:homospermidine synthase (spermidine-specific) activity"/>
    <property type="evidence" value="ECO:0007669"/>
    <property type="project" value="RHEA"/>
</dbReference>
<dbReference type="GO" id="GO:0047296">
    <property type="term" value="F:homospermidine synthase activity"/>
    <property type="evidence" value="ECO:0007669"/>
    <property type="project" value="UniProtKB-EC"/>
</dbReference>
<dbReference type="Gene3D" id="3.30.360.30">
    <property type="entry name" value="homospermidine synthase like"/>
    <property type="match status" value="1"/>
</dbReference>
<dbReference type="Gene3D" id="3.40.50.720">
    <property type="entry name" value="NAD(P)-binding Rossmann-like Domain"/>
    <property type="match status" value="1"/>
</dbReference>
<dbReference type="InterPro" id="IPR023181">
    <property type="entry name" value="Homospermid_syn-like_C"/>
</dbReference>
<dbReference type="InterPro" id="IPR032095">
    <property type="entry name" value="Sacchrp_dh-like_C"/>
</dbReference>
<dbReference type="InterPro" id="IPR005097">
    <property type="entry name" value="Sacchrp_dh_NADP-bd"/>
</dbReference>
<dbReference type="Pfam" id="PF16653">
    <property type="entry name" value="Sacchrp_dh_C"/>
    <property type="match status" value="1"/>
</dbReference>
<dbReference type="Pfam" id="PF03435">
    <property type="entry name" value="Sacchrp_dh_NADP"/>
    <property type="match status" value="1"/>
</dbReference>
<proteinExistence type="evidence at protein level"/>
<accession>O32323</accession>
<gene>
    <name type="primary">hss</name>
</gene>
<reference key="1">
    <citation type="journal article" date="1996" name="Eur. J. Biochem.">
        <title>Purification, molecular cloning and expression in Escherichia coli of homospermidine synthase from Rhodopseudomonas viridis.</title>
        <authorList>
            <person name="Tholl D."/>
            <person name="Ober D."/>
            <person name="Martin W."/>
            <person name="Kellermann J."/>
            <person name="Hartmann T."/>
        </authorList>
    </citation>
    <scope>NUCLEOTIDE SEQUENCE [MRNA]</scope>
    <scope>PARTIAL PROTEIN SEQUENCE</scope>
    <source>
        <strain>DSM 134 / 2450</strain>
    </source>
</reference>
<sequence>MTDWPVYHRIDGPIVMIGFGSIGRGTLPLIERHFAFDRSKLVVIDPSDEARKLAEARGVRFIQQAVTRDNYRELLVPLLTAGPGQGFCVNLSVDTSSLDIMELARENGALYIDTVVEPWLGFYFDPDLKPEARSNYALRETVLAARRNKPGGTTAVSCCGANPGMVSWFVKQALVNLAADLGVTGEEPTTREEWARLAMDLGVKGIHIAERDTQRASFPKPFDVFVNTWSVEGFVSEGLQPAELGWGTFERWMPDNARGHDSGCGAGIYLLQPGANTRVRSWTPTAMAQYGFLVTHNESISIADFLTVRDAAGQAVYRPTCHYAYHPCNDAVLSLHEMFGSGKRQSDWRILDETEIVDGIDELGVLLYGHGKNAYWYGSQLSIEETRRIAPDQNATGLQVSSAVLAGMVWALENPNAGIVEADDLDFRRCLEVQTPYLGPVVGVYTDWTPLAGRPGLFPEDIDTSDPWQFRNVLVRD</sequence>
<comment type="function">
    <text>Involved in the NAD(+)-dependent synthesis of the polyamine homospermidine from putrescine.</text>
</comment>
<comment type="catalytic activity">
    <reaction>
        <text>2 putrescine = sym-homospermidine + NH4(+)</text>
        <dbReference type="Rhea" id="RHEA:18645"/>
        <dbReference type="ChEBI" id="CHEBI:28938"/>
        <dbReference type="ChEBI" id="CHEBI:57811"/>
        <dbReference type="ChEBI" id="CHEBI:326268"/>
        <dbReference type="EC" id="2.5.1.44"/>
    </reaction>
</comment>
<comment type="catalytic activity">
    <reaction>
        <text>putrescine + spermidine = sym-homospermidine + propane-1,3-diamine</text>
        <dbReference type="Rhea" id="RHEA:11236"/>
        <dbReference type="ChEBI" id="CHEBI:57484"/>
        <dbReference type="ChEBI" id="CHEBI:57811"/>
        <dbReference type="ChEBI" id="CHEBI:57834"/>
        <dbReference type="ChEBI" id="CHEBI:326268"/>
        <dbReference type="EC" id="2.5.1.44"/>
    </reaction>
</comment>
<comment type="cofactor">
    <cofactor>
        <name>NAD(+)</name>
        <dbReference type="ChEBI" id="CHEBI:57540"/>
    </cofactor>
</comment>
<comment type="subunit">
    <text>Homodimer.</text>
</comment>
<comment type="similarity">
    <text evidence="1">Belongs to the saccharopine dehydrogenase family.</text>
</comment>
<name>HSS_BLAVI</name>
<feature type="chain" id="PRO_0000084084" description="Homospermidine synthase">
    <location>
        <begin position="1"/>
        <end position="477"/>
    </location>
</feature>
<feature type="strand" evidence="5">
    <location>
        <begin position="8"/>
        <end position="10"/>
    </location>
</feature>
<feature type="strand" evidence="3">
    <location>
        <begin position="14"/>
        <end position="17"/>
    </location>
</feature>
<feature type="helix" evidence="3">
    <location>
        <begin position="21"/>
        <end position="33"/>
    </location>
</feature>
<feature type="strand" evidence="5">
    <location>
        <begin position="34"/>
        <end position="36"/>
    </location>
</feature>
<feature type="helix" evidence="3">
    <location>
        <begin position="38"/>
        <end position="40"/>
    </location>
</feature>
<feature type="strand" evidence="3">
    <location>
        <begin position="41"/>
        <end position="44"/>
    </location>
</feature>
<feature type="helix" evidence="3">
    <location>
        <begin position="48"/>
        <end position="56"/>
    </location>
</feature>
<feature type="strand" evidence="3">
    <location>
        <begin position="60"/>
        <end position="62"/>
    </location>
</feature>
<feature type="turn" evidence="3">
    <location>
        <begin position="68"/>
        <end position="70"/>
    </location>
</feature>
<feature type="helix" evidence="3">
    <location>
        <begin position="71"/>
        <end position="79"/>
    </location>
</feature>
<feature type="strand" evidence="3">
    <location>
        <begin position="82"/>
        <end position="84"/>
    </location>
</feature>
<feature type="strand" evidence="3">
    <location>
        <begin position="87"/>
        <end position="90"/>
    </location>
</feature>
<feature type="strand" evidence="3">
    <location>
        <begin position="93"/>
        <end position="95"/>
    </location>
</feature>
<feature type="helix" evidence="3">
    <location>
        <begin position="97"/>
        <end position="106"/>
    </location>
</feature>
<feature type="strand" evidence="3">
    <location>
        <begin position="110"/>
        <end position="112"/>
    </location>
</feature>
<feature type="helix" evidence="3">
    <location>
        <begin position="122"/>
        <end position="124"/>
    </location>
</feature>
<feature type="strand" evidence="4">
    <location>
        <begin position="126"/>
        <end position="128"/>
    </location>
</feature>
<feature type="helix" evidence="3">
    <location>
        <begin position="130"/>
        <end position="133"/>
    </location>
</feature>
<feature type="helix" evidence="3">
    <location>
        <begin position="135"/>
        <end position="148"/>
    </location>
</feature>
<feature type="strand" evidence="3">
    <location>
        <begin position="151"/>
        <end position="153"/>
    </location>
</feature>
<feature type="strand" evidence="3">
    <location>
        <begin position="155"/>
        <end position="158"/>
    </location>
</feature>
<feature type="turn" evidence="3">
    <location>
        <begin position="161"/>
        <end position="163"/>
    </location>
</feature>
<feature type="helix" evidence="3">
    <location>
        <begin position="165"/>
        <end position="180"/>
    </location>
</feature>
<feature type="helix" evidence="3">
    <location>
        <begin position="191"/>
        <end position="201"/>
    </location>
</feature>
<feature type="strand" evidence="3">
    <location>
        <begin position="205"/>
        <end position="212"/>
    </location>
</feature>
<feature type="strand" evidence="3">
    <location>
        <begin position="215"/>
        <end position="218"/>
    </location>
</feature>
<feature type="strand" evidence="3">
    <location>
        <begin position="224"/>
        <end position="229"/>
    </location>
</feature>
<feature type="helix" evidence="3">
    <location>
        <begin position="231"/>
        <end position="239"/>
    </location>
</feature>
<feature type="strand" evidence="3">
    <location>
        <begin position="240"/>
        <end position="245"/>
    </location>
</feature>
<feature type="strand" evidence="3">
    <location>
        <begin position="261"/>
        <end position="265"/>
    </location>
</feature>
<feature type="strand" evidence="3">
    <location>
        <begin position="267"/>
        <end position="273"/>
    </location>
</feature>
<feature type="helix" evidence="3">
    <location>
        <begin position="274"/>
        <end position="276"/>
    </location>
</feature>
<feature type="strand" evidence="3">
    <location>
        <begin position="278"/>
        <end position="283"/>
    </location>
</feature>
<feature type="turn" evidence="3">
    <location>
        <begin position="284"/>
        <end position="286"/>
    </location>
</feature>
<feature type="strand" evidence="3">
    <location>
        <begin position="287"/>
        <end position="292"/>
    </location>
</feature>
<feature type="helix" evidence="3">
    <location>
        <begin position="297"/>
        <end position="305"/>
    </location>
</feature>
<feature type="strand" evidence="3">
    <location>
        <begin position="315"/>
        <end position="317"/>
    </location>
</feature>
<feature type="strand" evidence="3">
    <location>
        <begin position="320"/>
        <end position="326"/>
    </location>
</feature>
<feature type="helix" evidence="3">
    <location>
        <begin position="329"/>
        <end position="341"/>
    </location>
</feature>
<feature type="strand" evidence="3">
    <location>
        <begin position="346"/>
        <end position="350"/>
    </location>
</feature>
<feature type="helix" evidence="3">
    <location>
        <begin position="353"/>
        <end position="355"/>
    </location>
</feature>
<feature type="strand" evidence="3">
    <location>
        <begin position="356"/>
        <end position="358"/>
    </location>
</feature>
<feature type="strand" evidence="3">
    <location>
        <begin position="360"/>
        <end position="370"/>
    </location>
</feature>
<feature type="strand" evidence="3">
    <location>
        <begin position="373"/>
        <end position="379"/>
    </location>
</feature>
<feature type="helix" evidence="3">
    <location>
        <begin position="383"/>
        <end position="389"/>
    </location>
</feature>
<feature type="strand" evidence="2">
    <location>
        <begin position="390"/>
        <end position="392"/>
    </location>
</feature>
<feature type="helix" evidence="3">
    <location>
        <begin position="395"/>
        <end position="413"/>
    </location>
</feature>
<feature type="strand" evidence="3">
    <location>
        <begin position="419"/>
        <end position="421"/>
    </location>
</feature>
<feature type="helix" evidence="3">
    <location>
        <begin position="422"/>
        <end position="424"/>
    </location>
</feature>
<feature type="helix" evidence="3">
    <location>
        <begin position="427"/>
        <end position="434"/>
    </location>
</feature>
<feature type="helix" evidence="3">
    <location>
        <begin position="435"/>
        <end position="437"/>
    </location>
</feature>
<feature type="strand" evidence="3">
    <location>
        <begin position="441"/>
        <end position="446"/>
    </location>
</feature>
<feature type="turn" evidence="3">
    <location>
        <begin position="450"/>
        <end position="453"/>
    </location>
</feature>
<feature type="helix" evidence="3">
    <location>
        <begin position="470"/>
        <end position="473"/>
    </location>
</feature>
<protein>
    <recommendedName>
        <fullName>Homospermidine synthase</fullName>
        <shortName>HSS</shortName>
        <ecNumber>2.5.1.44</ecNumber>
    </recommendedName>
</protein>
<keyword id="KW-0002">3D-structure</keyword>
<keyword id="KW-0903">Direct protein sequencing</keyword>
<keyword id="KW-0520">NAD</keyword>
<keyword id="KW-0808">Transferase</keyword>
<organism>
    <name type="scientific">Blastochloris viridis</name>
    <name type="common">Rhodopseudomonas viridis</name>
    <dbReference type="NCBI Taxonomy" id="1079"/>
    <lineage>
        <taxon>Bacteria</taxon>
        <taxon>Pseudomonadati</taxon>
        <taxon>Pseudomonadota</taxon>
        <taxon>Alphaproteobacteria</taxon>
        <taxon>Hyphomicrobiales</taxon>
        <taxon>Blastochloridaceae</taxon>
        <taxon>Blastochloris</taxon>
    </lineage>
</organism>
<evidence type="ECO:0000305" key="1"/>
<evidence type="ECO:0007829" key="2">
    <source>
        <dbReference type="PDB" id="4PLP"/>
    </source>
</evidence>
<evidence type="ECO:0007829" key="3">
    <source>
        <dbReference type="PDB" id="4XQC"/>
    </source>
</evidence>
<evidence type="ECO:0007829" key="4">
    <source>
        <dbReference type="PDB" id="4XR4"/>
    </source>
</evidence>
<evidence type="ECO:0007829" key="5">
    <source>
        <dbReference type="PDB" id="6S6G"/>
    </source>
</evidence>